<keyword id="KW-1185">Reference proteome</keyword>
<keyword id="KW-0728">SH3 domain</keyword>
<name>SH3Y1_BOVIN</name>
<protein>
    <recommendedName>
        <fullName>SH3 domain-containing YSC84-like protein 1</fullName>
    </recommendedName>
</protein>
<proteinExistence type="evidence at transcript level"/>
<evidence type="ECO:0000250" key="1"/>
<evidence type="ECO:0000255" key="2">
    <source>
        <dbReference type="PROSITE-ProRule" id="PRU00192"/>
    </source>
</evidence>
<evidence type="ECO:0000256" key="3">
    <source>
        <dbReference type="SAM" id="MobiDB-lite"/>
    </source>
</evidence>
<evidence type="ECO:0000305" key="4"/>
<sequence>MNNPIPSNLKSEAKKAAKILREFTEITSRNGPDKIIPAHVIAKAKGLAILSVIKAGFLVTARGGSGIVLARLPDGKWSAPSAIGIAGLGGGFELGIEVSDLVIILNYDRAVEAFAKGGNLTLGGNLTVAVGPLGRNLEGNVSLRSSAAVFTYCKSRGLFAGISLEGSCLIERKETNRKFYCQDIRAYDILFGDITRPAQAEDLYEVLDSFTEKYEIEGQRVNARRAAREQKKASAKLPPKPSSRPEQSSAQVQLSSGSQSSRNEYNLYPELSSYRERVGNSNQPIEVTALYSFEGQQPGDLNFQAGDRITVISKTDSHFDWWEGKLRGRTGIFPANYVTMN</sequence>
<dbReference type="EMBL" id="BC103306">
    <property type="protein sequence ID" value="AAI03307.1"/>
    <property type="molecule type" value="mRNA"/>
</dbReference>
<dbReference type="RefSeq" id="NP_001029779.1">
    <property type="nucleotide sequence ID" value="NM_001034607.1"/>
</dbReference>
<dbReference type="SMR" id="Q3SZ01"/>
<dbReference type="FunCoup" id="Q3SZ01">
    <property type="interactions" value="501"/>
</dbReference>
<dbReference type="STRING" id="9913.ENSBTAP00000030484"/>
<dbReference type="PaxDb" id="9913-ENSBTAP00000030484"/>
<dbReference type="GeneID" id="534337"/>
<dbReference type="KEGG" id="bta:534337"/>
<dbReference type="CTD" id="26751"/>
<dbReference type="VEuPathDB" id="HostDB:ENSBTAG00000020495"/>
<dbReference type="eggNOG" id="KOG1843">
    <property type="taxonomic scope" value="Eukaryota"/>
</dbReference>
<dbReference type="InParanoid" id="Q3SZ01"/>
<dbReference type="OMA" id="SNCKARN"/>
<dbReference type="OrthoDB" id="443981at2759"/>
<dbReference type="Proteomes" id="UP000009136">
    <property type="component" value="Chromosome 8"/>
</dbReference>
<dbReference type="Bgee" id="ENSBTAG00000020495">
    <property type="expression patterns" value="Expressed in prostate gland and 98 other cell types or tissues"/>
</dbReference>
<dbReference type="GO" id="GO:0032587">
    <property type="term" value="C:ruffle membrane"/>
    <property type="evidence" value="ECO:0000318"/>
    <property type="project" value="GO_Central"/>
</dbReference>
<dbReference type="GO" id="GO:0035091">
    <property type="term" value="F:phosphatidylinositol binding"/>
    <property type="evidence" value="ECO:0000318"/>
    <property type="project" value="GO_Central"/>
</dbReference>
<dbReference type="GO" id="GO:1900027">
    <property type="term" value="P:regulation of ruffle assembly"/>
    <property type="evidence" value="ECO:0000318"/>
    <property type="project" value="GO_Central"/>
</dbReference>
<dbReference type="CDD" id="cd11841">
    <property type="entry name" value="SH3_SH3YL1_like"/>
    <property type="match status" value="1"/>
</dbReference>
<dbReference type="CDD" id="cd11525">
    <property type="entry name" value="SYLF_SH3YL1_like"/>
    <property type="match status" value="1"/>
</dbReference>
<dbReference type="FunFam" id="2.30.30.40:FF:000100">
    <property type="entry name" value="SH3 domain-containing YSC84-like protein 1"/>
    <property type="match status" value="1"/>
</dbReference>
<dbReference type="Gene3D" id="2.30.30.40">
    <property type="entry name" value="SH3 Domains"/>
    <property type="match status" value="1"/>
</dbReference>
<dbReference type="InterPro" id="IPR036028">
    <property type="entry name" value="SH3-like_dom_sf"/>
</dbReference>
<dbReference type="InterPro" id="IPR001452">
    <property type="entry name" value="SH3_domain"/>
</dbReference>
<dbReference type="InterPro" id="IPR051702">
    <property type="entry name" value="SH3_domain_YSC84-like"/>
</dbReference>
<dbReference type="InterPro" id="IPR035511">
    <property type="entry name" value="SH3YL1_SH3"/>
</dbReference>
<dbReference type="InterPro" id="IPR033643">
    <property type="entry name" value="SYLF_SH3YL1-like"/>
</dbReference>
<dbReference type="InterPro" id="IPR007461">
    <property type="entry name" value="Ysc84_actin-binding"/>
</dbReference>
<dbReference type="PANTHER" id="PTHR15629:SF2">
    <property type="entry name" value="SH3 DOMAIN-CONTAINING YSC84-LIKE PROTEIN 1"/>
    <property type="match status" value="1"/>
</dbReference>
<dbReference type="PANTHER" id="PTHR15629">
    <property type="entry name" value="SH3YL1 PROTEIN"/>
    <property type="match status" value="1"/>
</dbReference>
<dbReference type="Pfam" id="PF14604">
    <property type="entry name" value="SH3_9"/>
    <property type="match status" value="1"/>
</dbReference>
<dbReference type="Pfam" id="PF04366">
    <property type="entry name" value="Ysc84"/>
    <property type="match status" value="1"/>
</dbReference>
<dbReference type="PRINTS" id="PR00452">
    <property type="entry name" value="SH3DOMAIN"/>
</dbReference>
<dbReference type="SMART" id="SM00326">
    <property type="entry name" value="SH3"/>
    <property type="match status" value="1"/>
</dbReference>
<dbReference type="SUPFAM" id="SSF50044">
    <property type="entry name" value="SH3-domain"/>
    <property type="match status" value="1"/>
</dbReference>
<dbReference type="PROSITE" id="PS50002">
    <property type="entry name" value="SH3"/>
    <property type="match status" value="1"/>
</dbReference>
<organism>
    <name type="scientific">Bos taurus</name>
    <name type="common">Bovine</name>
    <dbReference type="NCBI Taxonomy" id="9913"/>
    <lineage>
        <taxon>Eukaryota</taxon>
        <taxon>Metazoa</taxon>
        <taxon>Chordata</taxon>
        <taxon>Craniata</taxon>
        <taxon>Vertebrata</taxon>
        <taxon>Euteleostomi</taxon>
        <taxon>Mammalia</taxon>
        <taxon>Eutheria</taxon>
        <taxon>Laurasiatheria</taxon>
        <taxon>Artiodactyla</taxon>
        <taxon>Ruminantia</taxon>
        <taxon>Pecora</taxon>
        <taxon>Bovidae</taxon>
        <taxon>Bovinae</taxon>
        <taxon>Bos</taxon>
    </lineage>
</organism>
<gene>
    <name type="primary">SH3YL1</name>
</gene>
<accession>Q3SZ01</accession>
<feature type="chain" id="PRO_0000341559" description="SH3 domain-containing YSC84-like protein 1">
    <location>
        <begin position="1"/>
        <end position="341"/>
    </location>
</feature>
<feature type="domain" description="SH3" evidence="2">
    <location>
        <begin position="282"/>
        <end position="341"/>
    </location>
</feature>
<feature type="region of interest" description="Disordered" evidence="3">
    <location>
        <begin position="221"/>
        <end position="265"/>
    </location>
</feature>
<feature type="compositionally biased region" description="Polar residues" evidence="3">
    <location>
        <begin position="246"/>
        <end position="264"/>
    </location>
</feature>
<reference key="1">
    <citation type="submission" date="2005-08" db="EMBL/GenBank/DDBJ databases">
        <authorList>
            <consortium name="NIH - Mammalian Gene Collection (MGC) project"/>
        </authorList>
    </citation>
    <scope>NUCLEOTIDE SEQUENCE [LARGE SCALE MRNA]</scope>
    <source>
        <strain>Hereford</strain>
        <tissue>Uterus</tissue>
    </source>
</reference>
<comment type="subunit">
    <text evidence="1">Interacts with SH3D19.</text>
</comment>
<comment type="similarity">
    <text evidence="4">Belongs to the SH3YL1 family.</text>
</comment>